<sequence length="288" mass="33787">MDSINPQSEFNSEEFVGRFNVIGRDRINCEYLSQLLYSAIIQNLKIKLDDKEYLIFNEYQENVFQLIDSLREFDENIIFIVLEYLASKEYHYLIDCIIMWWCLPNKNMFMSKNMYNKSYKQNIEKFNSKLTNRITHSLIESFCRDALSKTNKIPIHCLDLLWYYMNGMAIDLDFYNSNNCVNVTIIVPEDEESADNSDSTSYVTFGINMEFVLEMGIGKISYSTDPGKKKSFGNYLWQFITSEDTIDAIKFSKSFSNYKSQVLSINKNTVKYFGLDLKIPESVISRLM</sequence>
<accession>Q5UPX8</accession>
<organism>
    <name type="scientific">Acanthamoeba polyphaga mimivirus</name>
    <name type="common">APMV</name>
    <dbReference type="NCBI Taxonomy" id="212035"/>
    <lineage>
        <taxon>Viruses</taxon>
        <taxon>Varidnaviria</taxon>
        <taxon>Bamfordvirae</taxon>
        <taxon>Nucleocytoviricota</taxon>
        <taxon>Megaviricetes</taxon>
        <taxon>Imitervirales</taxon>
        <taxon>Mimiviridae</taxon>
        <taxon>Megamimivirinae</taxon>
        <taxon>Mimivirus</taxon>
        <taxon>Mimivirus bradfordmassiliense</taxon>
    </lineage>
</organism>
<reference key="1">
    <citation type="journal article" date="2004" name="Science">
        <title>The 1.2-megabase genome sequence of Mimivirus.</title>
        <authorList>
            <person name="Raoult D."/>
            <person name="Audic S."/>
            <person name="Robert C."/>
            <person name="Abergel C."/>
            <person name="Renesto P."/>
            <person name="Ogata H."/>
            <person name="La Scola B."/>
            <person name="Susan M."/>
            <person name="Claverie J.-M."/>
        </authorList>
    </citation>
    <scope>NUCLEOTIDE SEQUENCE [LARGE SCALE GENOMIC DNA]</scope>
    <source>
        <strain>Rowbotham-Bradford</strain>
    </source>
</reference>
<keyword id="KW-1185">Reference proteome</keyword>
<proteinExistence type="predicted"/>
<protein>
    <recommendedName>
        <fullName>Uncharacterized protein L234</fullName>
    </recommendedName>
</protein>
<gene>
    <name type="ordered locus">MIMI_L234</name>
</gene>
<feature type="chain" id="PRO_0000253235" description="Uncharacterized protein L234">
    <location>
        <begin position="1"/>
        <end position="288"/>
    </location>
</feature>
<organismHost>
    <name type="scientific">Acanthamoeba polyphaga</name>
    <name type="common">Amoeba</name>
    <dbReference type="NCBI Taxonomy" id="5757"/>
</organismHost>
<dbReference type="EMBL" id="AY653733">
    <property type="protein sequence ID" value="AAV50507.1"/>
    <property type="molecule type" value="Genomic_DNA"/>
</dbReference>
<dbReference type="KEGG" id="vg:9924841"/>
<dbReference type="OrthoDB" id="16288at10239"/>
<dbReference type="Proteomes" id="UP000001134">
    <property type="component" value="Genome"/>
</dbReference>
<name>YL234_MIMIV</name>